<reference key="1">
    <citation type="journal article" date="2006" name="PLoS Biol.">
        <title>Metabolic complementarity and genomics of the dual bacterial symbiosis of sharpshooters.</title>
        <authorList>
            <person name="Wu D."/>
            <person name="Daugherty S.C."/>
            <person name="Van Aken S.E."/>
            <person name="Pai G.H."/>
            <person name="Watkins K.L."/>
            <person name="Khouri H."/>
            <person name="Tallon L.J."/>
            <person name="Zaborsky J.M."/>
            <person name="Dunbar H.E."/>
            <person name="Tran P.L."/>
            <person name="Moran N.A."/>
            <person name="Eisen J.A."/>
        </authorList>
    </citation>
    <scope>NUCLEOTIDE SEQUENCE [LARGE SCALE GENOMIC DNA]</scope>
</reference>
<protein>
    <recommendedName>
        <fullName evidence="1">Multifunctional CCA protein</fullName>
    </recommendedName>
    <domain>
        <recommendedName>
            <fullName evidence="1">CCA-adding enzyme</fullName>
            <ecNumber evidence="1">2.7.7.72</ecNumber>
        </recommendedName>
        <alternativeName>
            <fullName evidence="1">CCA tRNA nucleotidyltransferase</fullName>
        </alternativeName>
        <alternativeName>
            <fullName evidence="1">tRNA CCA-pyrophosphorylase</fullName>
        </alternativeName>
        <alternativeName>
            <fullName evidence="1">tRNA adenylyl-/cytidylyl-transferase</fullName>
        </alternativeName>
        <alternativeName>
            <fullName evidence="1">tRNA nucleotidyltransferase</fullName>
        </alternativeName>
        <alternativeName>
            <fullName evidence="1">tRNA-NT</fullName>
        </alternativeName>
    </domain>
    <domain>
        <recommendedName>
            <fullName evidence="1">2'-nucleotidase</fullName>
            <ecNumber evidence="1">3.1.3.-</ecNumber>
        </recommendedName>
    </domain>
    <domain>
        <recommendedName>
            <fullName evidence="1">2',3'-cyclic phosphodiesterase</fullName>
            <ecNumber evidence="1">3.1.4.-</ecNumber>
        </recommendedName>
    </domain>
    <domain>
        <recommendedName>
            <fullName evidence="1">Phosphatase</fullName>
            <ecNumber evidence="1">3.1.3.-</ecNumber>
        </recommendedName>
    </domain>
</protein>
<accession>Q1LSL7</accession>
<gene>
    <name evidence="1" type="primary">cca</name>
    <name type="ordered locus">BCI_0622</name>
</gene>
<evidence type="ECO:0000255" key="1">
    <source>
        <dbReference type="HAMAP-Rule" id="MF_01261"/>
    </source>
</evidence>
<keyword id="KW-0067">ATP-binding</keyword>
<keyword id="KW-0378">Hydrolase</keyword>
<keyword id="KW-0460">Magnesium</keyword>
<keyword id="KW-0479">Metal-binding</keyword>
<keyword id="KW-0511">Multifunctional enzyme</keyword>
<keyword id="KW-0533">Nickel</keyword>
<keyword id="KW-0547">Nucleotide-binding</keyword>
<keyword id="KW-0548">Nucleotidyltransferase</keyword>
<keyword id="KW-1185">Reference proteome</keyword>
<keyword id="KW-0692">RNA repair</keyword>
<keyword id="KW-0694">RNA-binding</keyword>
<keyword id="KW-0808">Transferase</keyword>
<keyword id="KW-0819">tRNA processing</keyword>
<proteinExistence type="inferred from homology"/>
<comment type="function">
    <text evidence="1">Catalyzes the addition and repair of the essential 3'-terminal CCA sequence in tRNAs without using a nucleic acid template. Adds these three nucleotides in the order of C, C, and A to the tRNA nucleotide-73, using CTP and ATP as substrates and producing inorganic pyrophosphate. tRNA 3'-terminal CCA addition is required both for tRNA processing and repair. Also involved in tRNA surveillance by mediating tandem CCA addition to generate a CCACCA at the 3' terminus of unstable tRNAs. While stable tRNAs receive only 3'-terminal CCA, unstable tRNAs are marked with CCACCA and rapidly degraded.</text>
</comment>
<comment type="catalytic activity">
    <reaction evidence="1">
        <text>a tRNA precursor + 2 CTP + ATP = a tRNA with a 3' CCA end + 3 diphosphate</text>
        <dbReference type="Rhea" id="RHEA:14433"/>
        <dbReference type="Rhea" id="RHEA-COMP:10465"/>
        <dbReference type="Rhea" id="RHEA-COMP:10468"/>
        <dbReference type="ChEBI" id="CHEBI:30616"/>
        <dbReference type="ChEBI" id="CHEBI:33019"/>
        <dbReference type="ChEBI" id="CHEBI:37563"/>
        <dbReference type="ChEBI" id="CHEBI:74896"/>
        <dbReference type="ChEBI" id="CHEBI:83071"/>
        <dbReference type="EC" id="2.7.7.72"/>
    </reaction>
</comment>
<comment type="catalytic activity">
    <reaction evidence="1">
        <text>a tRNA with a 3' CCA end + 2 CTP + ATP = a tRNA with a 3' CCACCA end + 3 diphosphate</text>
        <dbReference type="Rhea" id="RHEA:76235"/>
        <dbReference type="Rhea" id="RHEA-COMP:10468"/>
        <dbReference type="Rhea" id="RHEA-COMP:18655"/>
        <dbReference type="ChEBI" id="CHEBI:30616"/>
        <dbReference type="ChEBI" id="CHEBI:33019"/>
        <dbReference type="ChEBI" id="CHEBI:37563"/>
        <dbReference type="ChEBI" id="CHEBI:83071"/>
        <dbReference type="ChEBI" id="CHEBI:195187"/>
    </reaction>
    <physiologicalReaction direction="left-to-right" evidence="1">
        <dbReference type="Rhea" id="RHEA:76236"/>
    </physiologicalReaction>
</comment>
<comment type="cofactor">
    <cofactor evidence="1">
        <name>Mg(2+)</name>
        <dbReference type="ChEBI" id="CHEBI:18420"/>
    </cofactor>
    <text evidence="1">Magnesium is required for nucleotidyltransferase activity.</text>
</comment>
<comment type="cofactor">
    <cofactor evidence="1">
        <name>Ni(2+)</name>
        <dbReference type="ChEBI" id="CHEBI:49786"/>
    </cofactor>
    <text evidence="1">Nickel for phosphatase activity.</text>
</comment>
<comment type="subunit">
    <text evidence="1">Monomer. Can also form homodimers and oligomers.</text>
</comment>
<comment type="domain">
    <text evidence="1">Comprises two domains: an N-terminal domain containing the nucleotidyltransferase activity and a C-terminal HD domain associated with both phosphodiesterase and phosphatase activities.</text>
</comment>
<comment type="miscellaneous">
    <text evidence="1">A single active site specifically recognizes both ATP and CTP and is responsible for their addition.</text>
</comment>
<comment type="similarity">
    <text evidence="1">Belongs to the tRNA nucleotidyltransferase/poly(A) polymerase family. Bacterial CCA-adding enzyme type 1 subfamily.</text>
</comment>
<sequence length="412" mass="47235">MKKYLVGGAVRDRLLQIPVKERDWVVIGTTLQDMLKAGYQQVGKDFPVFLHPKSHEEYALARIEKKSATGGYTGFTYKASSEITLEEDLKRRDLTINAIACDENGSLIDPYNGQRDLNQRWLRHVSEAFCEDPLRVLRVARFAAQLAYLNFRIVPETRLMMQHMISELPLLSPERIWKETEKALATRDPQIYFQVLRDCGALKTLFPEIDALFGVPAPAKWHPEIDTGIHTMMTVAMAARLSDSIAVRFASLCHDIGKGLTPRDHWPSHHGHGPAGIPLVQSLCQRLRVPNSIRNLAIIVTEYHDLLHYAVKLKPKTLIKLFYAIDVWRRPERLEQIIIISEADARGRAGYENHFYKPGQFIREAYRIASSIMPCQVISHNLTGNKIGEKLRQYRQQAIATWKQQNYESKQQ</sequence>
<dbReference type="EC" id="2.7.7.72" evidence="1"/>
<dbReference type="EC" id="3.1.3.-" evidence="1"/>
<dbReference type="EC" id="3.1.4.-" evidence="1"/>
<dbReference type="EMBL" id="CP000238">
    <property type="protein sequence ID" value="ABF14019.1"/>
    <property type="molecule type" value="Genomic_DNA"/>
</dbReference>
<dbReference type="RefSeq" id="WP_011520780.1">
    <property type="nucleotide sequence ID" value="NC_007984.1"/>
</dbReference>
<dbReference type="SMR" id="Q1LSL7"/>
<dbReference type="STRING" id="374463.BCI_0622"/>
<dbReference type="KEGG" id="bci:BCI_0622"/>
<dbReference type="HOGENOM" id="CLU_015961_1_1_6"/>
<dbReference type="OrthoDB" id="9805698at2"/>
<dbReference type="Proteomes" id="UP000002427">
    <property type="component" value="Chromosome"/>
</dbReference>
<dbReference type="GO" id="GO:0005524">
    <property type="term" value="F:ATP binding"/>
    <property type="evidence" value="ECO:0007669"/>
    <property type="project" value="UniProtKB-UniRule"/>
</dbReference>
<dbReference type="GO" id="GO:0004810">
    <property type="term" value="F:CCA tRNA nucleotidyltransferase activity"/>
    <property type="evidence" value="ECO:0007669"/>
    <property type="project" value="UniProtKB-UniRule"/>
</dbReference>
<dbReference type="GO" id="GO:0004112">
    <property type="term" value="F:cyclic-nucleotide phosphodiesterase activity"/>
    <property type="evidence" value="ECO:0007669"/>
    <property type="project" value="UniProtKB-UniRule"/>
</dbReference>
<dbReference type="GO" id="GO:0000287">
    <property type="term" value="F:magnesium ion binding"/>
    <property type="evidence" value="ECO:0007669"/>
    <property type="project" value="UniProtKB-UniRule"/>
</dbReference>
<dbReference type="GO" id="GO:0016791">
    <property type="term" value="F:phosphatase activity"/>
    <property type="evidence" value="ECO:0007669"/>
    <property type="project" value="UniProtKB-UniRule"/>
</dbReference>
<dbReference type="GO" id="GO:0000049">
    <property type="term" value="F:tRNA binding"/>
    <property type="evidence" value="ECO:0007669"/>
    <property type="project" value="UniProtKB-UniRule"/>
</dbReference>
<dbReference type="GO" id="GO:0042245">
    <property type="term" value="P:RNA repair"/>
    <property type="evidence" value="ECO:0007669"/>
    <property type="project" value="UniProtKB-KW"/>
</dbReference>
<dbReference type="GO" id="GO:0001680">
    <property type="term" value="P:tRNA 3'-terminal CCA addition"/>
    <property type="evidence" value="ECO:0007669"/>
    <property type="project" value="UniProtKB-UniRule"/>
</dbReference>
<dbReference type="CDD" id="cd00077">
    <property type="entry name" value="HDc"/>
    <property type="match status" value="1"/>
</dbReference>
<dbReference type="FunFam" id="1.10.3090.10:FF:000001">
    <property type="entry name" value="Multifunctional CCA protein"/>
    <property type="match status" value="1"/>
</dbReference>
<dbReference type="Gene3D" id="3.30.460.10">
    <property type="entry name" value="Beta Polymerase, domain 2"/>
    <property type="match status" value="1"/>
</dbReference>
<dbReference type="Gene3D" id="1.10.3090.10">
    <property type="entry name" value="cca-adding enzyme, domain 2"/>
    <property type="match status" value="1"/>
</dbReference>
<dbReference type="HAMAP" id="MF_01261">
    <property type="entry name" value="CCA_bact_type1"/>
    <property type="match status" value="1"/>
</dbReference>
<dbReference type="HAMAP" id="MF_01262">
    <property type="entry name" value="CCA_bact_type2"/>
    <property type="match status" value="1"/>
</dbReference>
<dbReference type="InterPro" id="IPR012006">
    <property type="entry name" value="CCA_bact"/>
</dbReference>
<dbReference type="InterPro" id="IPR003607">
    <property type="entry name" value="HD/PDEase_dom"/>
</dbReference>
<dbReference type="InterPro" id="IPR006674">
    <property type="entry name" value="HD_domain"/>
</dbReference>
<dbReference type="InterPro" id="IPR043519">
    <property type="entry name" value="NT_sf"/>
</dbReference>
<dbReference type="InterPro" id="IPR002646">
    <property type="entry name" value="PolA_pol_head_dom"/>
</dbReference>
<dbReference type="InterPro" id="IPR032828">
    <property type="entry name" value="PolyA_RNA-bd"/>
</dbReference>
<dbReference type="InterPro" id="IPR050124">
    <property type="entry name" value="tRNA_CCA-adding_enzyme"/>
</dbReference>
<dbReference type="NCBIfam" id="NF008137">
    <property type="entry name" value="PRK10885.1"/>
    <property type="match status" value="1"/>
</dbReference>
<dbReference type="PANTHER" id="PTHR47545">
    <property type="entry name" value="MULTIFUNCTIONAL CCA PROTEIN"/>
    <property type="match status" value="1"/>
</dbReference>
<dbReference type="PANTHER" id="PTHR47545:SF1">
    <property type="entry name" value="MULTIFUNCTIONAL CCA PROTEIN"/>
    <property type="match status" value="1"/>
</dbReference>
<dbReference type="Pfam" id="PF01966">
    <property type="entry name" value="HD"/>
    <property type="match status" value="1"/>
</dbReference>
<dbReference type="Pfam" id="PF01743">
    <property type="entry name" value="PolyA_pol"/>
    <property type="match status" value="1"/>
</dbReference>
<dbReference type="Pfam" id="PF12627">
    <property type="entry name" value="PolyA_pol_RNAbd"/>
    <property type="match status" value="1"/>
</dbReference>
<dbReference type="PIRSF" id="PIRSF000813">
    <property type="entry name" value="CCA_bact"/>
    <property type="match status" value="1"/>
</dbReference>
<dbReference type="SUPFAM" id="SSF81301">
    <property type="entry name" value="Nucleotidyltransferase"/>
    <property type="match status" value="1"/>
</dbReference>
<dbReference type="SUPFAM" id="SSF81891">
    <property type="entry name" value="Poly A polymerase C-terminal region-like"/>
    <property type="match status" value="1"/>
</dbReference>
<dbReference type="PROSITE" id="PS51831">
    <property type="entry name" value="HD"/>
    <property type="match status" value="1"/>
</dbReference>
<organism>
    <name type="scientific">Baumannia cicadellinicola subsp. Homalodisca coagulata</name>
    <dbReference type="NCBI Taxonomy" id="374463"/>
    <lineage>
        <taxon>Bacteria</taxon>
        <taxon>Pseudomonadati</taxon>
        <taxon>Pseudomonadota</taxon>
        <taxon>Gammaproteobacteria</taxon>
        <taxon>Candidatus Palibaumannia</taxon>
    </lineage>
</organism>
<name>CCA_BAUCH</name>
<feature type="chain" id="PRO_1000054249" description="Multifunctional CCA protein">
    <location>
        <begin position="1"/>
        <end position="412"/>
    </location>
</feature>
<feature type="domain" description="HD" evidence="1">
    <location>
        <begin position="227"/>
        <end position="328"/>
    </location>
</feature>
<feature type="binding site" evidence="1">
    <location>
        <position position="8"/>
    </location>
    <ligand>
        <name>ATP</name>
        <dbReference type="ChEBI" id="CHEBI:30616"/>
    </ligand>
</feature>
<feature type="binding site" evidence="1">
    <location>
        <position position="8"/>
    </location>
    <ligand>
        <name>CTP</name>
        <dbReference type="ChEBI" id="CHEBI:37563"/>
    </ligand>
</feature>
<feature type="binding site" evidence="1">
    <location>
        <position position="11"/>
    </location>
    <ligand>
        <name>ATP</name>
        <dbReference type="ChEBI" id="CHEBI:30616"/>
    </ligand>
</feature>
<feature type="binding site" evidence="1">
    <location>
        <position position="11"/>
    </location>
    <ligand>
        <name>CTP</name>
        <dbReference type="ChEBI" id="CHEBI:37563"/>
    </ligand>
</feature>
<feature type="binding site" evidence="1">
    <location>
        <position position="21"/>
    </location>
    <ligand>
        <name>Mg(2+)</name>
        <dbReference type="ChEBI" id="CHEBI:18420"/>
    </ligand>
</feature>
<feature type="binding site" evidence="1">
    <location>
        <position position="23"/>
    </location>
    <ligand>
        <name>Mg(2+)</name>
        <dbReference type="ChEBI" id="CHEBI:18420"/>
    </ligand>
</feature>
<feature type="binding site" evidence="1">
    <location>
        <position position="92"/>
    </location>
    <ligand>
        <name>ATP</name>
        <dbReference type="ChEBI" id="CHEBI:30616"/>
    </ligand>
</feature>
<feature type="binding site" evidence="1">
    <location>
        <position position="92"/>
    </location>
    <ligand>
        <name>CTP</name>
        <dbReference type="ChEBI" id="CHEBI:37563"/>
    </ligand>
</feature>
<feature type="binding site" evidence="1">
    <location>
        <position position="138"/>
    </location>
    <ligand>
        <name>ATP</name>
        <dbReference type="ChEBI" id="CHEBI:30616"/>
    </ligand>
</feature>
<feature type="binding site" evidence="1">
    <location>
        <position position="138"/>
    </location>
    <ligand>
        <name>CTP</name>
        <dbReference type="ChEBI" id="CHEBI:37563"/>
    </ligand>
</feature>
<feature type="binding site" evidence="1">
    <location>
        <position position="141"/>
    </location>
    <ligand>
        <name>ATP</name>
        <dbReference type="ChEBI" id="CHEBI:30616"/>
    </ligand>
</feature>
<feature type="binding site" evidence="1">
    <location>
        <position position="141"/>
    </location>
    <ligand>
        <name>CTP</name>
        <dbReference type="ChEBI" id="CHEBI:37563"/>
    </ligand>
</feature>